<gene>
    <name evidence="1" type="primary">leuS</name>
    <name type="ordered locus">Meso_3209</name>
</gene>
<accession>Q11DE4</accession>
<sequence length="871" mass="97963">MATERYNPRTSEPRWQKAWEEARLFETKNDDGRPTYYVLEMFPYPSGRIHIGHTRNYTMGDVVARYKRAKGYNVLHPMGWDAFGMPAENAAIQNKIHPKEWTYDNIATMRSQLKMMGLSLDWAREFATCDVDYYHRQQMLFIDFYKKGLVRRKTSKVNWDPVEQTVLANEQVIDGRGWRSGALVEQRELAQWFFKITDYAEDLLSAIDGLDDWPEKVRLMQRNWIGRSEGLSIRWALAEDTAPAGVGELEVYTTRPDTIFGASFLAVAPDHPLARKAAEGNPALATFIEECRHMGTSVAALETAEKKGFDTGIRVKHPFDAEWTLPVYVANFVLMEYGTGAIFGCPSGDQRDFDFANKYGLPVIPVVMPEGADAATFEITAEPYVDDGVMLNSRFLDGMSNKEAFEEVASRLEKETLDGKPVAKRKVNFRLRDWGVSRQRYWGCPIPMIHCDTCGVVPVPKEELPVKLPDDVDFDRPGNPLDRHPTWRHVKCPQCGADARRETDTMDTFVDSSWYFARFTSPHADSPVEKDVVNRWLPVDQYIGGIEHAILHLLYSRFFTRAMRDTGHLDLAEPFKGLFTQGMVVHETYRAEDGRWLTPAEVRIEGSAGERRAFEIATGKEVAIGPLEKMSKSKKNTVSPEDITESFGADTARWFMLSDSPPERDVEWTDDGAAGAHRFVQRAWRLITEAAPAIGDITPKAARDGDAAAISKPAHKALKAVGEDIERLAFNRAIARIHELVNDLQGPFAGLDKADEETRAAAREATEILIHLIAPFMPHLAEECWAAIGGKDLVAASRWPDFDPELVLDNLIVLPVQINGKKRGDLTIAREADQAAVEKAVLELDFVQKALNGAPPRKVIVVSQRIVNVVA</sequence>
<reference key="1">
    <citation type="submission" date="2006-06" db="EMBL/GenBank/DDBJ databases">
        <title>Complete sequence of chromosome of Mesorhizobium sp. BNC1.</title>
        <authorList>
            <consortium name="US DOE Joint Genome Institute"/>
            <person name="Copeland A."/>
            <person name="Lucas S."/>
            <person name="Lapidus A."/>
            <person name="Barry K."/>
            <person name="Detter J.C."/>
            <person name="Glavina del Rio T."/>
            <person name="Hammon N."/>
            <person name="Israni S."/>
            <person name="Dalin E."/>
            <person name="Tice H."/>
            <person name="Pitluck S."/>
            <person name="Chertkov O."/>
            <person name="Brettin T."/>
            <person name="Bruce D."/>
            <person name="Han C."/>
            <person name="Tapia R."/>
            <person name="Gilna P."/>
            <person name="Schmutz J."/>
            <person name="Larimer F."/>
            <person name="Land M."/>
            <person name="Hauser L."/>
            <person name="Kyrpides N."/>
            <person name="Mikhailova N."/>
            <person name="Richardson P."/>
        </authorList>
    </citation>
    <scope>NUCLEOTIDE SEQUENCE [LARGE SCALE GENOMIC DNA]</scope>
    <source>
        <strain>BNC1</strain>
    </source>
</reference>
<proteinExistence type="inferred from homology"/>
<name>SYL_CHESB</name>
<protein>
    <recommendedName>
        <fullName evidence="1">Leucine--tRNA ligase</fullName>
        <ecNumber evidence="1">6.1.1.4</ecNumber>
    </recommendedName>
    <alternativeName>
        <fullName evidence="1">Leucyl-tRNA synthetase</fullName>
        <shortName evidence="1">LeuRS</shortName>
    </alternativeName>
</protein>
<comment type="catalytic activity">
    <reaction evidence="1">
        <text>tRNA(Leu) + L-leucine + ATP = L-leucyl-tRNA(Leu) + AMP + diphosphate</text>
        <dbReference type="Rhea" id="RHEA:11688"/>
        <dbReference type="Rhea" id="RHEA-COMP:9613"/>
        <dbReference type="Rhea" id="RHEA-COMP:9622"/>
        <dbReference type="ChEBI" id="CHEBI:30616"/>
        <dbReference type="ChEBI" id="CHEBI:33019"/>
        <dbReference type="ChEBI" id="CHEBI:57427"/>
        <dbReference type="ChEBI" id="CHEBI:78442"/>
        <dbReference type="ChEBI" id="CHEBI:78494"/>
        <dbReference type="ChEBI" id="CHEBI:456215"/>
        <dbReference type="EC" id="6.1.1.4"/>
    </reaction>
</comment>
<comment type="subcellular location">
    <subcellularLocation>
        <location evidence="1">Cytoplasm</location>
    </subcellularLocation>
</comment>
<comment type="similarity">
    <text evidence="1">Belongs to the class-I aminoacyl-tRNA synthetase family.</text>
</comment>
<feature type="chain" id="PRO_1000009369" description="Leucine--tRNA ligase">
    <location>
        <begin position="1"/>
        <end position="871"/>
    </location>
</feature>
<feature type="short sequence motif" description="'HIGH' region">
    <location>
        <begin position="43"/>
        <end position="53"/>
    </location>
</feature>
<feature type="short sequence motif" description="'KMSKS' region">
    <location>
        <begin position="629"/>
        <end position="633"/>
    </location>
</feature>
<feature type="binding site" evidence="1">
    <location>
        <position position="632"/>
    </location>
    <ligand>
        <name>ATP</name>
        <dbReference type="ChEBI" id="CHEBI:30616"/>
    </ligand>
</feature>
<dbReference type="EC" id="6.1.1.4" evidence="1"/>
<dbReference type="EMBL" id="CP000390">
    <property type="protein sequence ID" value="ABG64581.1"/>
    <property type="molecule type" value="Genomic_DNA"/>
</dbReference>
<dbReference type="SMR" id="Q11DE4"/>
<dbReference type="STRING" id="266779.Meso_3209"/>
<dbReference type="KEGG" id="mes:Meso_3209"/>
<dbReference type="eggNOG" id="COG0495">
    <property type="taxonomic scope" value="Bacteria"/>
</dbReference>
<dbReference type="HOGENOM" id="CLU_004427_0_0_5"/>
<dbReference type="OrthoDB" id="9810365at2"/>
<dbReference type="GO" id="GO:0005829">
    <property type="term" value="C:cytosol"/>
    <property type="evidence" value="ECO:0007669"/>
    <property type="project" value="TreeGrafter"/>
</dbReference>
<dbReference type="GO" id="GO:0002161">
    <property type="term" value="F:aminoacyl-tRNA deacylase activity"/>
    <property type="evidence" value="ECO:0007669"/>
    <property type="project" value="InterPro"/>
</dbReference>
<dbReference type="GO" id="GO:0005524">
    <property type="term" value="F:ATP binding"/>
    <property type="evidence" value="ECO:0007669"/>
    <property type="project" value="UniProtKB-UniRule"/>
</dbReference>
<dbReference type="GO" id="GO:0004823">
    <property type="term" value="F:leucine-tRNA ligase activity"/>
    <property type="evidence" value="ECO:0007669"/>
    <property type="project" value="UniProtKB-UniRule"/>
</dbReference>
<dbReference type="GO" id="GO:0006429">
    <property type="term" value="P:leucyl-tRNA aminoacylation"/>
    <property type="evidence" value="ECO:0007669"/>
    <property type="project" value="UniProtKB-UniRule"/>
</dbReference>
<dbReference type="CDD" id="cd07958">
    <property type="entry name" value="Anticodon_Ia_Leu_BEm"/>
    <property type="match status" value="1"/>
</dbReference>
<dbReference type="CDD" id="cd00812">
    <property type="entry name" value="LeuRS_core"/>
    <property type="match status" value="1"/>
</dbReference>
<dbReference type="FunFam" id="1.10.730.10:FF:000002">
    <property type="entry name" value="Leucine--tRNA ligase"/>
    <property type="match status" value="1"/>
</dbReference>
<dbReference type="FunFam" id="3.40.50.620:FF:000003">
    <property type="entry name" value="Leucine--tRNA ligase"/>
    <property type="match status" value="1"/>
</dbReference>
<dbReference type="FunFam" id="3.40.50.620:FF:000056">
    <property type="entry name" value="Leucine--tRNA ligase"/>
    <property type="match status" value="1"/>
</dbReference>
<dbReference type="Gene3D" id="2.20.28.290">
    <property type="match status" value="1"/>
</dbReference>
<dbReference type="Gene3D" id="3.10.20.590">
    <property type="match status" value="1"/>
</dbReference>
<dbReference type="Gene3D" id="3.40.50.620">
    <property type="entry name" value="HUPs"/>
    <property type="match status" value="2"/>
</dbReference>
<dbReference type="Gene3D" id="1.10.730.10">
    <property type="entry name" value="Isoleucyl-tRNA Synthetase, Domain 1"/>
    <property type="match status" value="1"/>
</dbReference>
<dbReference type="HAMAP" id="MF_00049_B">
    <property type="entry name" value="Leu_tRNA_synth_B"/>
    <property type="match status" value="1"/>
</dbReference>
<dbReference type="InterPro" id="IPR001412">
    <property type="entry name" value="aa-tRNA-synth_I_CS"/>
</dbReference>
<dbReference type="InterPro" id="IPR002300">
    <property type="entry name" value="aa-tRNA-synth_Ia"/>
</dbReference>
<dbReference type="InterPro" id="IPR002302">
    <property type="entry name" value="Leu-tRNA-ligase"/>
</dbReference>
<dbReference type="InterPro" id="IPR025709">
    <property type="entry name" value="Leu_tRNA-synth_edit"/>
</dbReference>
<dbReference type="InterPro" id="IPR013155">
    <property type="entry name" value="M/V/L/I-tRNA-synth_anticd-bd"/>
</dbReference>
<dbReference type="InterPro" id="IPR015413">
    <property type="entry name" value="Methionyl/Leucyl_tRNA_Synth"/>
</dbReference>
<dbReference type="InterPro" id="IPR014729">
    <property type="entry name" value="Rossmann-like_a/b/a_fold"/>
</dbReference>
<dbReference type="InterPro" id="IPR009080">
    <property type="entry name" value="tRNAsynth_Ia_anticodon-bd"/>
</dbReference>
<dbReference type="InterPro" id="IPR009008">
    <property type="entry name" value="Val/Leu/Ile-tRNA-synth_edit"/>
</dbReference>
<dbReference type="NCBIfam" id="TIGR00396">
    <property type="entry name" value="leuS_bact"/>
    <property type="match status" value="1"/>
</dbReference>
<dbReference type="PANTHER" id="PTHR43740:SF2">
    <property type="entry name" value="LEUCINE--TRNA LIGASE, MITOCHONDRIAL"/>
    <property type="match status" value="1"/>
</dbReference>
<dbReference type="PANTHER" id="PTHR43740">
    <property type="entry name" value="LEUCYL-TRNA SYNTHETASE"/>
    <property type="match status" value="1"/>
</dbReference>
<dbReference type="Pfam" id="PF08264">
    <property type="entry name" value="Anticodon_1"/>
    <property type="match status" value="1"/>
</dbReference>
<dbReference type="Pfam" id="PF00133">
    <property type="entry name" value="tRNA-synt_1"/>
    <property type="match status" value="2"/>
</dbReference>
<dbReference type="Pfam" id="PF13603">
    <property type="entry name" value="tRNA-synt_1_2"/>
    <property type="match status" value="1"/>
</dbReference>
<dbReference type="Pfam" id="PF09334">
    <property type="entry name" value="tRNA-synt_1g"/>
    <property type="match status" value="1"/>
</dbReference>
<dbReference type="PRINTS" id="PR00985">
    <property type="entry name" value="TRNASYNTHLEU"/>
</dbReference>
<dbReference type="SUPFAM" id="SSF47323">
    <property type="entry name" value="Anticodon-binding domain of a subclass of class I aminoacyl-tRNA synthetases"/>
    <property type="match status" value="1"/>
</dbReference>
<dbReference type="SUPFAM" id="SSF52374">
    <property type="entry name" value="Nucleotidylyl transferase"/>
    <property type="match status" value="1"/>
</dbReference>
<dbReference type="SUPFAM" id="SSF50677">
    <property type="entry name" value="ValRS/IleRS/LeuRS editing domain"/>
    <property type="match status" value="1"/>
</dbReference>
<dbReference type="PROSITE" id="PS00178">
    <property type="entry name" value="AA_TRNA_LIGASE_I"/>
    <property type="match status" value="1"/>
</dbReference>
<organism>
    <name type="scientific">Chelativorans sp. (strain BNC1)</name>
    <dbReference type="NCBI Taxonomy" id="266779"/>
    <lineage>
        <taxon>Bacteria</taxon>
        <taxon>Pseudomonadati</taxon>
        <taxon>Pseudomonadota</taxon>
        <taxon>Alphaproteobacteria</taxon>
        <taxon>Hyphomicrobiales</taxon>
        <taxon>Phyllobacteriaceae</taxon>
        <taxon>Chelativorans</taxon>
    </lineage>
</organism>
<keyword id="KW-0030">Aminoacyl-tRNA synthetase</keyword>
<keyword id="KW-0067">ATP-binding</keyword>
<keyword id="KW-0963">Cytoplasm</keyword>
<keyword id="KW-0436">Ligase</keyword>
<keyword id="KW-0547">Nucleotide-binding</keyword>
<keyword id="KW-0648">Protein biosynthesis</keyword>
<evidence type="ECO:0000255" key="1">
    <source>
        <dbReference type="HAMAP-Rule" id="MF_00049"/>
    </source>
</evidence>